<proteinExistence type="inferred from homology"/>
<keyword id="KW-0687">Ribonucleoprotein</keyword>
<keyword id="KW-0689">Ribosomal protein</keyword>
<keyword id="KW-0694">RNA-binding</keyword>
<keyword id="KW-0699">rRNA-binding</keyword>
<sequence length="85" mass="9524">MSEKTVRTLTGKVVSDKMDKSIVVLIERRVQHPLYGKSIRRSTKLHAHDENNVAKIGDVVTIKESRPISKTKAWTLVEVVEAAAE</sequence>
<dbReference type="EMBL" id="CP000521">
    <property type="protein sequence ID" value="ABO13469.1"/>
    <property type="molecule type" value="Genomic_DNA"/>
</dbReference>
<dbReference type="RefSeq" id="WP_001291845.1">
    <property type="nucleotide sequence ID" value="NZ_CP053098.1"/>
</dbReference>
<dbReference type="SMR" id="A3M975"/>
<dbReference type="GeneID" id="9380825"/>
<dbReference type="KEGG" id="acb:A1S_3072"/>
<dbReference type="HOGENOM" id="CLU_073626_1_1_6"/>
<dbReference type="GO" id="GO:0022627">
    <property type="term" value="C:cytosolic small ribosomal subunit"/>
    <property type="evidence" value="ECO:0007669"/>
    <property type="project" value="TreeGrafter"/>
</dbReference>
<dbReference type="GO" id="GO:0019843">
    <property type="term" value="F:rRNA binding"/>
    <property type="evidence" value="ECO:0007669"/>
    <property type="project" value="UniProtKB-UniRule"/>
</dbReference>
<dbReference type="GO" id="GO:0003735">
    <property type="term" value="F:structural constituent of ribosome"/>
    <property type="evidence" value="ECO:0007669"/>
    <property type="project" value="InterPro"/>
</dbReference>
<dbReference type="GO" id="GO:0006412">
    <property type="term" value="P:translation"/>
    <property type="evidence" value="ECO:0007669"/>
    <property type="project" value="UniProtKB-UniRule"/>
</dbReference>
<dbReference type="CDD" id="cd00364">
    <property type="entry name" value="Ribosomal_uS17"/>
    <property type="match status" value="1"/>
</dbReference>
<dbReference type="FunFam" id="2.40.50.140:FF:000014">
    <property type="entry name" value="30S ribosomal protein S17"/>
    <property type="match status" value="1"/>
</dbReference>
<dbReference type="Gene3D" id="2.40.50.140">
    <property type="entry name" value="Nucleic acid-binding proteins"/>
    <property type="match status" value="1"/>
</dbReference>
<dbReference type="HAMAP" id="MF_01345_B">
    <property type="entry name" value="Ribosomal_uS17_B"/>
    <property type="match status" value="1"/>
</dbReference>
<dbReference type="InterPro" id="IPR012340">
    <property type="entry name" value="NA-bd_OB-fold"/>
</dbReference>
<dbReference type="InterPro" id="IPR000266">
    <property type="entry name" value="Ribosomal_uS17"/>
</dbReference>
<dbReference type="InterPro" id="IPR019984">
    <property type="entry name" value="Ribosomal_uS17_bact/chlr"/>
</dbReference>
<dbReference type="InterPro" id="IPR019979">
    <property type="entry name" value="Ribosomal_uS17_CS"/>
</dbReference>
<dbReference type="NCBIfam" id="NF004123">
    <property type="entry name" value="PRK05610.1"/>
    <property type="match status" value="1"/>
</dbReference>
<dbReference type="NCBIfam" id="TIGR03635">
    <property type="entry name" value="uS17_bact"/>
    <property type="match status" value="1"/>
</dbReference>
<dbReference type="PANTHER" id="PTHR10744">
    <property type="entry name" value="40S RIBOSOMAL PROTEIN S11 FAMILY MEMBER"/>
    <property type="match status" value="1"/>
</dbReference>
<dbReference type="PANTHER" id="PTHR10744:SF1">
    <property type="entry name" value="SMALL RIBOSOMAL SUBUNIT PROTEIN US17M"/>
    <property type="match status" value="1"/>
</dbReference>
<dbReference type="Pfam" id="PF00366">
    <property type="entry name" value="Ribosomal_S17"/>
    <property type="match status" value="1"/>
</dbReference>
<dbReference type="PRINTS" id="PR00973">
    <property type="entry name" value="RIBOSOMALS17"/>
</dbReference>
<dbReference type="SUPFAM" id="SSF50249">
    <property type="entry name" value="Nucleic acid-binding proteins"/>
    <property type="match status" value="1"/>
</dbReference>
<dbReference type="PROSITE" id="PS00056">
    <property type="entry name" value="RIBOSOMAL_S17"/>
    <property type="match status" value="1"/>
</dbReference>
<comment type="function">
    <text evidence="1">One of the primary rRNA binding proteins, it binds specifically to the 5'-end of 16S ribosomal RNA.</text>
</comment>
<comment type="subunit">
    <text evidence="1">Part of the 30S ribosomal subunit.</text>
</comment>
<comment type="similarity">
    <text evidence="1">Belongs to the universal ribosomal protein uS17 family.</text>
</comment>
<reference key="1">
    <citation type="journal article" date="2007" name="Genes Dev.">
        <title>New insights into Acinetobacter baumannii pathogenesis revealed by high-density pyrosequencing and transposon mutagenesis.</title>
        <authorList>
            <person name="Smith M.G."/>
            <person name="Gianoulis T.A."/>
            <person name="Pukatzki S."/>
            <person name="Mekalanos J.J."/>
            <person name="Ornston L.N."/>
            <person name="Gerstein M."/>
            <person name="Snyder M."/>
        </authorList>
    </citation>
    <scope>NUCLEOTIDE SEQUENCE [LARGE SCALE GENOMIC DNA]</scope>
    <source>
        <strain>ATCC 17978 / DSM 105126 / CIP 53.77 / LMG 1025 / NCDC KC755 / 5377</strain>
    </source>
</reference>
<gene>
    <name evidence="1" type="primary">rpsQ</name>
    <name type="ordered locus">A1S_3072</name>
</gene>
<organism>
    <name type="scientific">Acinetobacter baumannii (strain ATCC 17978 / DSM 105126 / CIP 53.77 / LMG 1025 / NCDC KC755 / 5377)</name>
    <dbReference type="NCBI Taxonomy" id="400667"/>
    <lineage>
        <taxon>Bacteria</taxon>
        <taxon>Pseudomonadati</taxon>
        <taxon>Pseudomonadota</taxon>
        <taxon>Gammaproteobacteria</taxon>
        <taxon>Moraxellales</taxon>
        <taxon>Moraxellaceae</taxon>
        <taxon>Acinetobacter</taxon>
        <taxon>Acinetobacter calcoaceticus/baumannii complex</taxon>
    </lineage>
</organism>
<accession>A3M975</accession>
<feature type="chain" id="PRO_1000054906" description="Small ribosomal subunit protein uS17">
    <location>
        <begin position="1"/>
        <end position="85"/>
    </location>
</feature>
<protein>
    <recommendedName>
        <fullName evidence="1">Small ribosomal subunit protein uS17</fullName>
    </recommendedName>
    <alternativeName>
        <fullName evidence="2">30S ribosomal protein S17</fullName>
    </alternativeName>
</protein>
<name>RS17_ACIBT</name>
<evidence type="ECO:0000255" key="1">
    <source>
        <dbReference type="HAMAP-Rule" id="MF_01345"/>
    </source>
</evidence>
<evidence type="ECO:0000305" key="2"/>